<name>CYSN_SALDC</name>
<comment type="function">
    <text evidence="2">With CysD forms the ATP sulfurylase (ATPS) that catalyzes the adenylation of sulfate producing adenosine 5'-phosphosulfate (APS) and diphosphate, the first enzymatic step in sulfur assimilation pathway. APS synthesis involves the formation of a high-energy phosphoric-sulfuric acid anhydride bond driven by GTP hydrolysis by CysN coupled to ATP hydrolysis by CysD.</text>
</comment>
<comment type="catalytic activity">
    <reaction evidence="2">
        <text>sulfate + ATP + H(+) = adenosine 5'-phosphosulfate + diphosphate</text>
        <dbReference type="Rhea" id="RHEA:18133"/>
        <dbReference type="ChEBI" id="CHEBI:15378"/>
        <dbReference type="ChEBI" id="CHEBI:16189"/>
        <dbReference type="ChEBI" id="CHEBI:30616"/>
        <dbReference type="ChEBI" id="CHEBI:33019"/>
        <dbReference type="ChEBI" id="CHEBI:58243"/>
        <dbReference type="EC" id="2.7.7.4"/>
    </reaction>
</comment>
<comment type="pathway">
    <text evidence="2">Sulfur metabolism; hydrogen sulfide biosynthesis; sulfite from sulfate: step 1/3.</text>
</comment>
<comment type="subunit">
    <text evidence="2">Heterodimer composed of CysD, the smaller subunit, and CysN.</text>
</comment>
<comment type="similarity">
    <text evidence="2">Belongs to the TRAFAC class translation factor GTPase superfamily. Classic translation factor GTPase family. CysN/NodQ subfamily.</text>
</comment>
<sequence length="479" mass="53134">MNTILAQQIANEGGVEAWMIAQQHKSLLRFLTCGSVDDGKSTLIGRLLHDTLQIYEDQLSSLHNDSKRHGTQGEKLDLALLVDGLQAEREQGITIDVAYRYFSTEKRKFIIADTPGHEQYTRNMATGASTCDLAILLIDARKGVLDQTRRHSFISTLLGIKHLVVAINKMDLVDYREETFARIREDYLTFAEQLPGDLDIRFVPLSALEGDNVAAQSANMRWYSGPTLLEVLETVDIQRAVDRQPMRFPVQYVNRPNLDFRGYAGTLASGSVKVGERIKVLPSGVESSVARIVTFDGDKEEACAGEAITLVLNDDIDISRGDLLLAANETLAPARHAAIDVVWMAEQPLAPGQSYDVKLAGKKTRARIEAIRYQIDINNLTQRDVESLPLNGIGLVEMTFDEPLALDIYQQNPVTGGLIFIDRLSNVTVGAGMVRELDERGATPPVEYSAFELELNALVRRHFPHWDARDLLGDKHGAA</sequence>
<reference key="1">
    <citation type="journal article" date="2011" name="J. Bacteriol.">
        <title>Comparative genomics of 28 Salmonella enterica isolates: evidence for CRISPR-mediated adaptive sublineage evolution.</title>
        <authorList>
            <person name="Fricke W.F."/>
            <person name="Mammel M.K."/>
            <person name="McDermott P.F."/>
            <person name="Tartera C."/>
            <person name="White D.G."/>
            <person name="Leclerc J.E."/>
            <person name="Ravel J."/>
            <person name="Cebula T.A."/>
        </authorList>
    </citation>
    <scope>NUCLEOTIDE SEQUENCE [LARGE SCALE GENOMIC DNA]</scope>
    <source>
        <strain>CT_02021853</strain>
    </source>
</reference>
<feature type="chain" id="PRO_1000092152" description="Sulfate adenylyltransferase subunit 1">
    <location>
        <begin position="1"/>
        <end position="479"/>
    </location>
</feature>
<feature type="domain" description="tr-type G">
    <location>
        <begin position="25"/>
        <end position="239"/>
    </location>
</feature>
<feature type="region of interest" description="G1" evidence="1">
    <location>
        <begin position="34"/>
        <end position="41"/>
    </location>
</feature>
<feature type="region of interest" description="G2" evidence="1">
    <location>
        <begin position="92"/>
        <end position="96"/>
    </location>
</feature>
<feature type="region of interest" description="G3" evidence="1">
    <location>
        <begin position="113"/>
        <end position="116"/>
    </location>
</feature>
<feature type="region of interest" description="G4" evidence="1">
    <location>
        <begin position="168"/>
        <end position="171"/>
    </location>
</feature>
<feature type="region of interest" description="G5" evidence="1">
    <location>
        <begin position="206"/>
        <end position="208"/>
    </location>
</feature>
<feature type="binding site" evidence="2">
    <location>
        <begin position="34"/>
        <end position="41"/>
    </location>
    <ligand>
        <name>GTP</name>
        <dbReference type="ChEBI" id="CHEBI:37565"/>
    </ligand>
</feature>
<feature type="binding site" evidence="2">
    <location>
        <begin position="113"/>
        <end position="117"/>
    </location>
    <ligand>
        <name>GTP</name>
        <dbReference type="ChEBI" id="CHEBI:37565"/>
    </ligand>
</feature>
<feature type="binding site" evidence="2">
    <location>
        <begin position="168"/>
        <end position="171"/>
    </location>
    <ligand>
        <name>GTP</name>
        <dbReference type="ChEBI" id="CHEBI:37565"/>
    </ligand>
</feature>
<protein>
    <recommendedName>
        <fullName evidence="2">Sulfate adenylyltransferase subunit 1</fullName>
        <ecNumber evidence="2">2.7.7.4</ecNumber>
    </recommendedName>
    <alternativeName>
        <fullName evidence="2">ATP-sulfurylase large subunit</fullName>
    </alternativeName>
    <alternativeName>
        <fullName evidence="2">Sulfate adenylate transferase</fullName>
        <shortName evidence="2">SAT</shortName>
    </alternativeName>
</protein>
<keyword id="KW-0067">ATP-binding</keyword>
<keyword id="KW-0342">GTP-binding</keyword>
<keyword id="KW-0547">Nucleotide-binding</keyword>
<keyword id="KW-0548">Nucleotidyltransferase</keyword>
<keyword id="KW-0808">Transferase</keyword>
<accession>B5FTS9</accession>
<gene>
    <name evidence="2" type="primary">cysN</name>
    <name type="ordered locus">SeD_A3244</name>
</gene>
<proteinExistence type="inferred from homology"/>
<evidence type="ECO:0000250" key="1"/>
<evidence type="ECO:0000255" key="2">
    <source>
        <dbReference type="HAMAP-Rule" id="MF_00062"/>
    </source>
</evidence>
<organism>
    <name type="scientific">Salmonella dublin (strain CT_02021853)</name>
    <dbReference type="NCBI Taxonomy" id="439851"/>
    <lineage>
        <taxon>Bacteria</taxon>
        <taxon>Pseudomonadati</taxon>
        <taxon>Pseudomonadota</taxon>
        <taxon>Gammaproteobacteria</taxon>
        <taxon>Enterobacterales</taxon>
        <taxon>Enterobacteriaceae</taxon>
        <taxon>Salmonella</taxon>
    </lineage>
</organism>
<dbReference type="EC" id="2.7.7.4" evidence="2"/>
<dbReference type="EMBL" id="CP001144">
    <property type="protein sequence ID" value="ACH77577.1"/>
    <property type="molecule type" value="Genomic_DNA"/>
</dbReference>
<dbReference type="RefSeq" id="WP_001092256.1">
    <property type="nucleotide sequence ID" value="NC_011205.1"/>
</dbReference>
<dbReference type="SMR" id="B5FTS9"/>
<dbReference type="KEGG" id="sed:SeD_A3244"/>
<dbReference type="HOGENOM" id="CLU_007265_5_2_6"/>
<dbReference type="UniPathway" id="UPA00140">
    <property type="reaction ID" value="UER00204"/>
</dbReference>
<dbReference type="Proteomes" id="UP000008322">
    <property type="component" value="Chromosome"/>
</dbReference>
<dbReference type="GO" id="GO:0005524">
    <property type="term" value="F:ATP binding"/>
    <property type="evidence" value="ECO:0007669"/>
    <property type="project" value="UniProtKB-KW"/>
</dbReference>
<dbReference type="GO" id="GO:0005525">
    <property type="term" value="F:GTP binding"/>
    <property type="evidence" value="ECO:0007669"/>
    <property type="project" value="UniProtKB-UniRule"/>
</dbReference>
<dbReference type="GO" id="GO:0003924">
    <property type="term" value="F:GTPase activity"/>
    <property type="evidence" value="ECO:0007669"/>
    <property type="project" value="InterPro"/>
</dbReference>
<dbReference type="GO" id="GO:0004781">
    <property type="term" value="F:sulfate adenylyltransferase (ATP) activity"/>
    <property type="evidence" value="ECO:0007669"/>
    <property type="project" value="UniProtKB-UniRule"/>
</dbReference>
<dbReference type="GO" id="GO:0070814">
    <property type="term" value="P:hydrogen sulfide biosynthetic process"/>
    <property type="evidence" value="ECO:0007669"/>
    <property type="project" value="UniProtKB-UniRule"/>
</dbReference>
<dbReference type="GO" id="GO:0000103">
    <property type="term" value="P:sulfate assimilation"/>
    <property type="evidence" value="ECO:0007669"/>
    <property type="project" value="UniProtKB-UniRule"/>
</dbReference>
<dbReference type="CDD" id="cd04166">
    <property type="entry name" value="CysN_ATPS"/>
    <property type="match status" value="1"/>
</dbReference>
<dbReference type="CDD" id="cd03695">
    <property type="entry name" value="CysN_NodQ_II"/>
    <property type="match status" value="1"/>
</dbReference>
<dbReference type="CDD" id="cd04095">
    <property type="entry name" value="CysN_NoDQ_III"/>
    <property type="match status" value="1"/>
</dbReference>
<dbReference type="FunFam" id="2.40.30.10:FF:000027">
    <property type="entry name" value="Sulfate adenylyltransferase subunit 1"/>
    <property type="match status" value="1"/>
</dbReference>
<dbReference type="FunFam" id="2.40.30.10:FF:000031">
    <property type="entry name" value="Sulfate adenylyltransferase subunit 1"/>
    <property type="match status" value="1"/>
</dbReference>
<dbReference type="FunFam" id="3.40.50.300:FF:000119">
    <property type="entry name" value="Sulfate adenylyltransferase subunit 1"/>
    <property type="match status" value="1"/>
</dbReference>
<dbReference type="Gene3D" id="3.40.50.300">
    <property type="entry name" value="P-loop containing nucleotide triphosphate hydrolases"/>
    <property type="match status" value="1"/>
</dbReference>
<dbReference type="Gene3D" id="2.40.30.10">
    <property type="entry name" value="Translation factors"/>
    <property type="match status" value="2"/>
</dbReference>
<dbReference type="HAMAP" id="MF_00062">
    <property type="entry name" value="Sulf_adenylyltr_sub1"/>
    <property type="match status" value="1"/>
</dbReference>
<dbReference type="InterPro" id="IPR041757">
    <property type="entry name" value="CysN_GTP-bd"/>
</dbReference>
<dbReference type="InterPro" id="IPR044138">
    <property type="entry name" value="CysN_II"/>
</dbReference>
<dbReference type="InterPro" id="IPR044139">
    <property type="entry name" value="CysN_NoDQ_III"/>
</dbReference>
<dbReference type="InterPro" id="IPR031157">
    <property type="entry name" value="G_TR_CS"/>
</dbReference>
<dbReference type="InterPro" id="IPR054696">
    <property type="entry name" value="GTP-eEF1A_C"/>
</dbReference>
<dbReference type="InterPro" id="IPR027417">
    <property type="entry name" value="P-loop_NTPase"/>
</dbReference>
<dbReference type="InterPro" id="IPR005225">
    <property type="entry name" value="Small_GTP-bd"/>
</dbReference>
<dbReference type="InterPro" id="IPR011779">
    <property type="entry name" value="SO4_adenylTrfase_lsu"/>
</dbReference>
<dbReference type="InterPro" id="IPR000795">
    <property type="entry name" value="T_Tr_GTP-bd_dom"/>
</dbReference>
<dbReference type="InterPro" id="IPR050100">
    <property type="entry name" value="TRAFAC_GTPase_members"/>
</dbReference>
<dbReference type="InterPro" id="IPR009000">
    <property type="entry name" value="Transl_B-barrel_sf"/>
</dbReference>
<dbReference type="InterPro" id="IPR009001">
    <property type="entry name" value="Transl_elong_EF1A/Init_IF2_C"/>
</dbReference>
<dbReference type="NCBIfam" id="TIGR02034">
    <property type="entry name" value="CysN"/>
    <property type="match status" value="1"/>
</dbReference>
<dbReference type="NCBIfam" id="NF003478">
    <property type="entry name" value="PRK05124.1"/>
    <property type="match status" value="1"/>
</dbReference>
<dbReference type="NCBIfam" id="TIGR00231">
    <property type="entry name" value="small_GTP"/>
    <property type="match status" value="1"/>
</dbReference>
<dbReference type="PANTHER" id="PTHR23115">
    <property type="entry name" value="TRANSLATION FACTOR"/>
    <property type="match status" value="1"/>
</dbReference>
<dbReference type="Pfam" id="PF22594">
    <property type="entry name" value="GTP-eEF1A_C"/>
    <property type="match status" value="1"/>
</dbReference>
<dbReference type="Pfam" id="PF00009">
    <property type="entry name" value="GTP_EFTU"/>
    <property type="match status" value="1"/>
</dbReference>
<dbReference type="PRINTS" id="PR00315">
    <property type="entry name" value="ELONGATNFCT"/>
</dbReference>
<dbReference type="SUPFAM" id="SSF50465">
    <property type="entry name" value="EF-Tu/eEF-1alpha/eIF2-gamma C-terminal domain"/>
    <property type="match status" value="1"/>
</dbReference>
<dbReference type="SUPFAM" id="SSF52540">
    <property type="entry name" value="P-loop containing nucleoside triphosphate hydrolases"/>
    <property type="match status" value="1"/>
</dbReference>
<dbReference type="SUPFAM" id="SSF50447">
    <property type="entry name" value="Translation proteins"/>
    <property type="match status" value="1"/>
</dbReference>
<dbReference type="PROSITE" id="PS00301">
    <property type="entry name" value="G_TR_1"/>
    <property type="match status" value="1"/>
</dbReference>
<dbReference type="PROSITE" id="PS51722">
    <property type="entry name" value="G_TR_2"/>
    <property type="match status" value="1"/>
</dbReference>